<organism>
    <name type="scientific">Caenorhabditis elegans</name>
    <dbReference type="NCBI Taxonomy" id="6239"/>
    <lineage>
        <taxon>Eukaryota</taxon>
        <taxon>Metazoa</taxon>
        <taxon>Ecdysozoa</taxon>
        <taxon>Nematoda</taxon>
        <taxon>Chromadorea</taxon>
        <taxon>Rhabditida</taxon>
        <taxon>Rhabditina</taxon>
        <taxon>Rhabditomorpha</taxon>
        <taxon>Rhabditoidea</taxon>
        <taxon>Rhabditidae</taxon>
        <taxon>Peloderinae</taxon>
        <taxon>Caenorhabditis</taxon>
    </lineage>
</organism>
<accession>Q09441</accession>
<keyword id="KW-0156">Chromatin regulator</keyword>
<keyword id="KW-0238">DNA-binding</keyword>
<keyword id="KW-0539">Nucleus</keyword>
<keyword id="KW-1185">Reference proteome</keyword>
<keyword id="KW-0804">Transcription</keyword>
<keyword id="KW-0805">Transcription regulation</keyword>
<reference key="1">
    <citation type="journal article" date="1998" name="Science">
        <title>Genome sequence of the nematode C. elegans: a platform for investigating biology.</title>
        <authorList>
            <consortium name="The C. elegans sequencing consortium"/>
        </authorList>
    </citation>
    <scope>NUCLEOTIDE SEQUENCE [LARGE SCALE GENOMIC DNA]</scope>
    <source>
        <strain>Bristol N2</strain>
    </source>
</reference>
<reference evidence="6" key="2">
    <citation type="journal article" date="2014" name="Mol. Cell. Biol.">
        <title>The conserved PBAF nucleosome-remodeling complex mediates the response to stress in Caenorhabditis elegans.</title>
        <authorList>
            <person name="Kuzmanov A."/>
            <person name="Karina E.I."/>
            <person name="Kirienko N.V."/>
            <person name="Fay D.S."/>
        </authorList>
    </citation>
    <scope>FUNCTION</scope>
    <scope>SUBCELLULAR LOCATION</scope>
    <scope>INDUCTION BY HEAT STRESS</scope>
    <scope>DISRUPTION PHENOTYPE</scope>
</reference>
<evidence type="ECO:0000250" key="1">
    <source>
        <dbReference type="UniProtKB" id="Q68CP9"/>
    </source>
</evidence>
<evidence type="ECO:0000255" key="2">
    <source>
        <dbReference type="PROSITE-ProRule" id="PRU00355"/>
    </source>
</evidence>
<evidence type="ECO:0000255" key="3">
    <source>
        <dbReference type="PROSITE-ProRule" id="PRU00858"/>
    </source>
</evidence>
<evidence type="ECO:0000256" key="4">
    <source>
        <dbReference type="SAM" id="MobiDB-lite"/>
    </source>
</evidence>
<evidence type="ECO:0000269" key="5">
    <source>
    </source>
</evidence>
<evidence type="ECO:0000305" key="6"/>
<evidence type="ECO:0000312" key="7">
    <source>
        <dbReference type="WormBase" id="C08B11.3a"/>
    </source>
</evidence>
<gene>
    <name evidence="7" type="primary">swsn-7</name>
    <name evidence="7" type="ORF">C08B11.3</name>
</gene>
<protein>
    <recommendedName>
        <fullName evidence="6">SWI/SNF chromatin remodeling complex subunit swsn-7</fullName>
    </recommendedName>
    <alternativeName>
        <fullName evidence="1">ARID domain-containing 2 homolog</fullName>
    </alternativeName>
    <alternativeName>
        <fullName evidence="1">BRG1-associated factor 200</fullName>
        <shortName evidence="1">BAF200</shortName>
    </alternativeName>
    <alternativeName>
        <fullName evidence="7">SWI/SNF nucleosome remodeling complex component swsn-7</fullName>
    </alternativeName>
</protein>
<comment type="function">
    <text evidence="1 5">Involved in transcriptional activation and repression of select genes by chromatin remodeling (alteration of DNA-nucleosome topology) (By similarity). Required for the stability of the SWI/SNF chromatin remodeling complex SWI/SNF-B (PBAF) (By similarity). Required for regulation of a stress response gene network, probably as part of the PBAF complex and perhaps acting in concert with histone demethylase jmjc-1 (PubMed:24421384). Binds to the ethanol and stress response elements (ESRE) in the promoter regions of hsp-16.1 and hsp-16.2, probably as part of the PBAF complex (PubMed:24421384).</text>
</comment>
<comment type="subunit">
    <text evidence="1">Component of the SWI/SNF-B (PBAF) chromatin remodeling complex.</text>
</comment>
<comment type="subcellular location">
    <subcellularLocation>
        <location evidence="5">Nucleus</location>
    </subcellularLocation>
</comment>
<comment type="induction">
    <text evidence="5">Up-regulated in response to heat stress, perhaps at the level of translation or protein stability.</text>
</comment>
<comment type="disruption phenotype">
    <text evidence="5">Reduces expression of stress-inducible genes containing an ethanol and stress response element (ESRE) in their regulatory regions, such as hsp-16.1 and hsp-16.2; expression is further reduced by RNAi-mediated knockdown of histone demethylase jmjc-1 (PubMed:24421384). Reduces life-span (PubMed:24421384). RNAi-mediated knockdown has no effect on the viability of adults at 25 degrees Celsius, but adults are much less robust at 37 degrees Celsius (PubMed:24421384). Reduces embryonic fitness (PubMed:24421384).</text>
</comment>
<dbReference type="EMBL" id="Z46676">
    <property type="protein sequence ID" value="CAA86663.1"/>
    <property type="molecule type" value="Genomic_DNA"/>
</dbReference>
<dbReference type="PIR" id="T19068">
    <property type="entry name" value="T19068"/>
</dbReference>
<dbReference type="BioGRID" id="39618">
    <property type="interactions" value="5"/>
</dbReference>
<dbReference type="ComplexPortal" id="CPX-1031">
    <property type="entry name" value="PBAF chromatin remodeling complex"/>
</dbReference>
<dbReference type="FunCoup" id="Q09441">
    <property type="interactions" value="3352"/>
</dbReference>
<dbReference type="IntAct" id="Q09441">
    <property type="interactions" value="1"/>
</dbReference>
<dbReference type="STRING" id="6239.C08B11.3a.1"/>
<dbReference type="iPTMnet" id="Q09441"/>
<dbReference type="PaxDb" id="6239-C08B11.3"/>
<dbReference type="PeptideAtlas" id="Q09441"/>
<dbReference type="EnsemblMetazoa" id="C08B11.3a.1">
    <property type="protein sequence ID" value="C08B11.3a.1"/>
    <property type="gene ID" value="WBGene00007433"/>
</dbReference>
<dbReference type="KEGG" id="cel:CELE_C08B11.3"/>
<dbReference type="UCSC" id="C08B11.3">
    <property type="organism name" value="c. elegans"/>
</dbReference>
<dbReference type="AGR" id="WB:WBGene00007433"/>
<dbReference type="CTD" id="174286"/>
<dbReference type="WormBase" id="C08B11.3a">
    <property type="protein sequence ID" value="CE01473"/>
    <property type="gene ID" value="WBGene00007433"/>
    <property type="gene designation" value="swsn-7"/>
</dbReference>
<dbReference type="eggNOG" id="KOG2312">
    <property type="taxonomic scope" value="Eukaryota"/>
</dbReference>
<dbReference type="GeneTree" id="ENSGT00390000016138"/>
<dbReference type="HOGENOM" id="CLU_006903_0_0_1"/>
<dbReference type="InParanoid" id="Q09441"/>
<dbReference type="OMA" id="VKDIMMC"/>
<dbReference type="OrthoDB" id="338531at2759"/>
<dbReference type="PhylomeDB" id="Q09441"/>
<dbReference type="PRO" id="PR:Q09441"/>
<dbReference type="Proteomes" id="UP000001940">
    <property type="component" value="Chromosome II"/>
</dbReference>
<dbReference type="Bgee" id="WBGene00007433">
    <property type="expression patterns" value="Expressed in embryo and 4 other cell types or tissues"/>
</dbReference>
<dbReference type="ExpressionAtlas" id="Q09441">
    <property type="expression patterns" value="baseline and differential"/>
</dbReference>
<dbReference type="GO" id="GO:0035060">
    <property type="term" value="C:brahma complex"/>
    <property type="evidence" value="ECO:0000318"/>
    <property type="project" value="GO_Central"/>
</dbReference>
<dbReference type="GO" id="GO:0003677">
    <property type="term" value="F:DNA binding"/>
    <property type="evidence" value="ECO:0000318"/>
    <property type="project" value="GO_Central"/>
</dbReference>
<dbReference type="GO" id="GO:0006338">
    <property type="term" value="P:chromatin remodeling"/>
    <property type="evidence" value="ECO:0000318"/>
    <property type="project" value="GO_Central"/>
</dbReference>
<dbReference type="GO" id="GO:2000781">
    <property type="term" value="P:positive regulation of double-strand break repair"/>
    <property type="evidence" value="ECO:0000303"/>
    <property type="project" value="ComplexPortal"/>
</dbReference>
<dbReference type="GO" id="GO:0006355">
    <property type="term" value="P:regulation of DNA-templated transcription"/>
    <property type="evidence" value="ECO:0007669"/>
    <property type="project" value="InterPro"/>
</dbReference>
<dbReference type="GO" id="GO:2000045">
    <property type="term" value="P:regulation of G1/S transition of mitotic cell cycle"/>
    <property type="evidence" value="ECO:0000303"/>
    <property type="project" value="ComplexPortal"/>
</dbReference>
<dbReference type="GO" id="GO:0030071">
    <property type="term" value="P:regulation of mitotic metaphase/anaphase transition"/>
    <property type="evidence" value="ECO:0000303"/>
    <property type="project" value="ComplexPortal"/>
</dbReference>
<dbReference type="GO" id="GO:2000819">
    <property type="term" value="P:regulation of nucleotide-excision repair"/>
    <property type="evidence" value="ECO:0000303"/>
    <property type="project" value="ComplexPortal"/>
</dbReference>
<dbReference type="CDD" id="cd16100">
    <property type="entry name" value="ARID"/>
    <property type="match status" value="1"/>
</dbReference>
<dbReference type="Gene3D" id="1.10.150.60">
    <property type="entry name" value="ARID DNA-binding domain"/>
    <property type="match status" value="1"/>
</dbReference>
<dbReference type="InterPro" id="IPR001606">
    <property type="entry name" value="ARID_dom"/>
</dbReference>
<dbReference type="InterPro" id="IPR036431">
    <property type="entry name" value="ARID_dom_sf"/>
</dbReference>
<dbReference type="InterPro" id="IPR016024">
    <property type="entry name" value="ARM-type_fold"/>
</dbReference>
<dbReference type="InterPro" id="IPR052406">
    <property type="entry name" value="Chromatin_Remodeling_Comp"/>
</dbReference>
<dbReference type="InterPro" id="IPR003150">
    <property type="entry name" value="DNA-bd_RFX"/>
</dbReference>
<dbReference type="InterPro" id="IPR013087">
    <property type="entry name" value="Znf_C2H2_type"/>
</dbReference>
<dbReference type="PANTHER" id="PTHR22970">
    <property type="entry name" value="AT-RICH INTERACTIVE DOMAIN-CONTAINING PROTEIN 2"/>
    <property type="match status" value="1"/>
</dbReference>
<dbReference type="PANTHER" id="PTHR22970:SF14">
    <property type="entry name" value="AT-RICH INTERACTIVE DOMAIN-CONTAINING PROTEIN 2"/>
    <property type="match status" value="1"/>
</dbReference>
<dbReference type="Pfam" id="PF01388">
    <property type="entry name" value="ARID"/>
    <property type="match status" value="1"/>
</dbReference>
<dbReference type="SMART" id="SM01014">
    <property type="entry name" value="ARID"/>
    <property type="match status" value="1"/>
</dbReference>
<dbReference type="SMART" id="SM00501">
    <property type="entry name" value="BRIGHT"/>
    <property type="match status" value="1"/>
</dbReference>
<dbReference type="SUPFAM" id="SSF46774">
    <property type="entry name" value="ARID-like"/>
    <property type="match status" value="1"/>
</dbReference>
<dbReference type="SUPFAM" id="SSF48371">
    <property type="entry name" value="ARM repeat"/>
    <property type="match status" value="1"/>
</dbReference>
<dbReference type="PROSITE" id="PS51011">
    <property type="entry name" value="ARID"/>
    <property type="match status" value="1"/>
</dbReference>
<dbReference type="PROSITE" id="PS51526">
    <property type="entry name" value="RFX_DBD"/>
    <property type="match status" value="1"/>
</dbReference>
<feature type="chain" id="PRO_0000200600" description="SWI/SNF chromatin remodeling complex subunit swsn-7">
    <location>
        <begin position="1"/>
        <end position="1244"/>
    </location>
</feature>
<feature type="domain" description="ARID" evidence="2">
    <location>
        <begin position="24"/>
        <end position="116"/>
    </location>
</feature>
<feature type="DNA-binding region" description="RFX-type winged-helix" evidence="3">
    <location>
        <begin position="623"/>
        <end position="697"/>
    </location>
</feature>
<feature type="region of interest" description="Disordered" evidence="4">
    <location>
        <begin position="486"/>
        <end position="534"/>
    </location>
</feature>
<feature type="region of interest" description="Disordered" evidence="4">
    <location>
        <begin position="556"/>
        <end position="583"/>
    </location>
</feature>
<feature type="region of interest" description="Disordered" evidence="4">
    <location>
        <begin position="597"/>
        <end position="619"/>
    </location>
</feature>
<feature type="region of interest" description="Disordered" evidence="4">
    <location>
        <begin position="1134"/>
        <end position="1244"/>
    </location>
</feature>
<feature type="compositionally biased region" description="Polar residues" evidence="4">
    <location>
        <begin position="486"/>
        <end position="496"/>
    </location>
</feature>
<feature type="compositionally biased region" description="Low complexity" evidence="4">
    <location>
        <begin position="497"/>
        <end position="508"/>
    </location>
</feature>
<feature type="compositionally biased region" description="Polar residues" evidence="4">
    <location>
        <begin position="556"/>
        <end position="566"/>
    </location>
</feature>
<feature type="compositionally biased region" description="Pro residues" evidence="4">
    <location>
        <begin position="567"/>
        <end position="578"/>
    </location>
</feature>
<feature type="compositionally biased region" description="Polar residues" evidence="4">
    <location>
        <begin position="610"/>
        <end position="619"/>
    </location>
</feature>
<feature type="compositionally biased region" description="Low complexity" evidence="4">
    <location>
        <begin position="1142"/>
        <end position="1158"/>
    </location>
</feature>
<feature type="compositionally biased region" description="Polar residues" evidence="4">
    <location>
        <begin position="1159"/>
        <end position="1186"/>
    </location>
</feature>
<feature type="compositionally biased region" description="Polar residues" evidence="4">
    <location>
        <begin position="1194"/>
        <end position="1212"/>
    </location>
</feature>
<feature type="compositionally biased region" description="Low complexity" evidence="4">
    <location>
        <begin position="1220"/>
        <end position="1231"/>
    </location>
</feature>
<sequence>MESRKRKSELEHYIDKLTDPPEKQRKMAEFYNSLRMFYKRRWNATLKLPHVQGVEVNLYRLYDTVMALGGWQKVAASDKWSDIAEMFGCKDDILCGDHAIKIIYMRYLSKFEQVETIGDVDDYVDNEMSRSRGRNATSFFATNECPISNNRMVQEYQHRDERGQIINEPDYARLTKSLISGLPNEIDFAMNVCMLLSHAGPKQLRICHAPTLLTLLVAHTGVYDEDDETMADMGKEWKRTTKHNFRDFWASSGVPLDMLMTFLDREIEAEYIDEDDQFFTGVSETFNVKDSRCWRLNQVTTIIRNLSFEPANRVTIVKTWPVMKFLIMCASCKWSPLYVAALDALSNLATDIDLTDKTLVYISQHAILRIITDGIFSLDKFKLVRSLEILTGLCGFEGNEAIICDWLNSATIAHIFEVVGVKDIMMCVYTLECLYQISEMGDTACDLISESPKAIQQLVSMATLEAVSFGPAGLAGMKVVEYQPSFTQGSNQQQNPHHSQGGHQLGHSNVRMGGLNHNQHHQQIGPPGAPGAAPMTVRQVIQNNLALQQVQRENLNREQYSTQSSQPHPPHTNVPPSPSILAHHSSGLVQQNGMKFDRRTGNLPVRPIAPSTNSGESQLEQLTEKWIRQNCVFEPAMSTPRGELYAAYVDDLRNLYHSMSGSLAMFSGVMKNLYPDVNFRMAQNGIMIVAQGIRLIRPHRLAPAASQSASESHPLMKKMLTSEPKEENGVLINGHAVQESGAERIIKTEPIRTDEPSVLIESQEQSVPKKQNDINGEETDEVELNSKIVTPEKKSITNGTVEVCQEPIQASKLFDENYANQIEGSEVSIEIREQFVNDTDNVKLESEKINGIICNGNSKVKKESMASRAAHIVAVAAACNGDLERMNVVSNGNDIEKEIEKETEKVEEETNEEKNKEVVETEVVDDAQESEKRKCVPPSSNPTDYMCDWDCCSIYYASPSHVLKHLSEEHVAEELRLLCRWNGCADPTPRNRWSLITHIQDSHCNEAQLKAASQKRKEGGGIAPVRGAPRAEVISRDINNHPGYAKNAAFDAIRRHAFNFLSRELTDEAEGPVTKSIRLTSCLILRNLARYSAEGRQKLRRHESHICWLALSRLESAHALSQLLSELHQAPAAEEEQQKMLSEVPSSASLSSMAGSSSQLPTVPDSPTSSVASAPMKESTSVSNKPTVHINRMLNFSSLNEKTPTSPQFTAGSSPHRHQPIQQHIPSQPSPLVQTTPVRAGAGI</sequence>
<name>SWSN7_CAEEL</name>
<proteinExistence type="evidence at transcript level"/>